<reference key="1">
    <citation type="journal article" date="2006" name="Nat. Genet.">
        <title>The multidrug-resistant human pathogen Clostridium difficile has a highly mobile, mosaic genome.</title>
        <authorList>
            <person name="Sebaihia M."/>
            <person name="Wren B.W."/>
            <person name="Mullany P."/>
            <person name="Fairweather N.F."/>
            <person name="Minton N."/>
            <person name="Stabler R."/>
            <person name="Thomson N.R."/>
            <person name="Roberts A.P."/>
            <person name="Cerdeno-Tarraga A.M."/>
            <person name="Wang H."/>
            <person name="Holden M.T.G."/>
            <person name="Wright A."/>
            <person name="Churcher C."/>
            <person name="Quail M.A."/>
            <person name="Baker S."/>
            <person name="Bason N."/>
            <person name="Brooks K."/>
            <person name="Chillingworth T."/>
            <person name="Cronin A."/>
            <person name="Davis P."/>
            <person name="Dowd L."/>
            <person name="Fraser A."/>
            <person name="Feltwell T."/>
            <person name="Hance Z."/>
            <person name="Holroyd S."/>
            <person name="Jagels K."/>
            <person name="Moule S."/>
            <person name="Mungall K."/>
            <person name="Price C."/>
            <person name="Rabbinowitsch E."/>
            <person name="Sharp S."/>
            <person name="Simmonds M."/>
            <person name="Stevens K."/>
            <person name="Unwin L."/>
            <person name="Whithead S."/>
            <person name="Dupuy B."/>
            <person name="Dougan G."/>
            <person name="Barrell B."/>
            <person name="Parkhill J."/>
        </authorList>
    </citation>
    <scope>NUCLEOTIDE SEQUENCE [LARGE SCALE GENOMIC DNA]</scope>
    <source>
        <strain>630</strain>
    </source>
</reference>
<gene>
    <name evidence="1" type="primary">rpoA</name>
    <name type="ordered locus">CD630_00980</name>
</gene>
<dbReference type="EC" id="2.7.7.6" evidence="1"/>
<dbReference type="EMBL" id="AM180355">
    <property type="protein sequence ID" value="CAJ66917.1"/>
    <property type="molecule type" value="Genomic_DNA"/>
</dbReference>
<dbReference type="RefSeq" id="WP_003427733.1">
    <property type="nucleotide sequence ID" value="NZ_JAUPES010000043.1"/>
</dbReference>
<dbReference type="RefSeq" id="YP_001086566.1">
    <property type="nucleotide sequence ID" value="NC_009089.1"/>
</dbReference>
<dbReference type="PDB" id="7L7B">
    <property type="method" value="EM"/>
    <property type="resolution" value="3.26 A"/>
    <property type="chains" value="A/B=1-315"/>
</dbReference>
<dbReference type="PDBsum" id="7L7B"/>
<dbReference type="EMDB" id="EMD-23210"/>
<dbReference type="SMR" id="Q18CI5"/>
<dbReference type="STRING" id="272563.CD630_00980"/>
<dbReference type="ChEMBL" id="CHEMBL2363852"/>
<dbReference type="DrugCentral" id="Q18CI5"/>
<dbReference type="EnsemblBacteria" id="CAJ66917">
    <property type="protein sequence ID" value="CAJ66917"/>
    <property type="gene ID" value="CD630_00980"/>
</dbReference>
<dbReference type="KEGG" id="cdf:CD630_00980"/>
<dbReference type="KEGG" id="pdc:CDIF630_00168"/>
<dbReference type="PATRIC" id="fig|272563.120.peg.108"/>
<dbReference type="eggNOG" id="COG0202">
    <property type="taxonomic scope" value="Bacteria"/>
</dbReference>
<dbReference type="OrthoDB" id="9805706at2"/>
<dbReference type="PhylomeDB" id="Q18CI5"/>
<dbReference type="BioCyc" id="PDIF272563:G12WB-156-MONOMER"/>
<dbReference type="PRO" id="PR:Q18CI5"/>
<dbReference type="Proteomes" id="UP000001978">
    <property type="component" value="Chromosome"/>
</dbReference>
<dbReference type="GO" id="GO:0005737">
    <property type="term" value="C:cytoplasm"/>
    <property type="evidence" value="ECO:0007669"/>
    <property type="project" value="UniProtKB-ARBA"/>
</dbReference>
<dbReference type="GO" id="GO:0000428">
    <property type="term" value="C:DNA-directed RNA polymerase complex"/>
    <property type="evidence" value="ECO:0007669"/>
    <property type="project" value="UniProtKB-KW"/>
</dbReference>
<dbReference type="GO" id="GO:0003677">
    <property type="term" value="F:DNA binding"/>
    <property type="evidence" value="ECO:0007669"/>
    <property type="project" value="UniProtKB-UniRule"/>
</dbReference>
<dbReference type="GO" id="GO:0003899">
    <property type="term" value="F:DNA-directed RNA polymerase activity"/>
    <property type="evidence" value="ECO:0007669"/>
    <property type="project" value="UniProtKB-UniRule"/>
</dbReference>
<dbReference type="GO" id="GO:0046983">
    <property type="term" value="F:protein dimerization activity"/>
    <property type="evidence" value="ECO:0007669"/>
    <property type="project" value="InterPro"/>
</dbReference>
<dbReference type="GO" id="GO:0006351">
    <property type="term" value="P:DNA-templated transcription"/>
    <property type="evidence" value="ECO:0007669"/>
    <property type="project" value="UniProtKB-UniRule"/>
</dbReference>
<dbReference type="CDD" id="cd06928">
    <property type="entry name" value="RNAP_alpha_NTD"/>
    <property type="match status" value="1"/>
</dbReference>
<dbReference type="FunFam" id="1.10.150.20:FF:000001">
    <property type="entry name" value="DNA-directed RNA polymerase subunit alpha"/>
    <property type="match status" value="1"/>
</dbReference>
<dbReference type="FunFam" id="2.170.120.12:FF:000001">
    <property type="entry name" value="DNA-directed RNA polymerase subunit alpha"/>
    <property type="match status" value="1"/>
</dbReference>
<dbReference type="Gene3D" id="1.10.150.20">
    <property type="entry name" value="5' to 3' exonuclease, C-terminal subdomain"/>
    <property type="match status" value="1"/>
</dbReference>
<dbReference type="Gene3D" id="2.170.120.12">
    <property type="entry name" value="DNA-directed RNA polymerase, insert domain"/>
    <property type="match status" value="1"/>
</dbReference>
<dbReference type="Gene3D" id="3.30.1360.10">
    <property type="entry name" value="RNA polymerase, RBP11-like subunit"/>
    <property type="match status" value="1"/>
</dbReference>
<dbReference type="HAMAP" id="MF_00059">
    <property type="entry name" value="RNApol_bact_RpoA"/>
    <property type="match status" value="1"/>
</dbReference>
<dbReference type="InterPro" id="IPR011262">
    <property type="entry name" value="DNA-dir_RNA_pol_insert"/>
</dbReference>
<dbReference type="InterPro" id="IPR011263">
    <property type="entry name" value="DNA-dir_RNA_pol_RpoA/D/Rpb3"/>
</dbReference>
<dbReference type="InterPro" id="IPR011773">
    <property type="entry name" value="DNA-dir_RpoA"/>
</dbReference>
<dbReference type="InterPro" id="IPR036603">
    <property type="entry name" value="RBP11-like"/>
</dbReference>
<dbReference type="InterPro" id="IPR011260">
    <property type="entry name" value="RNAP_asu_C"/>
</dbReference>
<dbReference type="InterPro" id="IPR036643">
    <property type="entry name" value="RNApol_insert_sf"/>
</dbReference>
<dbReference type="NCBIfam" id="NF003513">
    <property type="entry name" value="PRK05182.1-2"/>
    <property type="match status" value="1"/>
</dbReference>
<dbReference type="NCBIfam" id="NF003515">
    <property type="entry name" value="PRK05182.2-1"/>
    <property type="match status" value="1"/>
</dbReference>
<dbReference type="NCBIfam" id="NF003516">
    <property type="entry name" value="PRK05182.2-2"/>
    <property type="match status" value="1"/>
</dbReference>
<dbReference type="NCBIfam" id="NF003519">
    <property type="entry name" value="PRK05182.2-5"/>
    <property type="match status" value="1"/>
</dbReference>
<dbReference type="NCBIfam" id="TIGR02027">
    <property type="entry name" value="rpoA"/>
    <property type="match status" value="1"/>
</dbReference>
<dbReference type="Pfam" id="PF01000">
    <property type="entry name" value="RNA_pol_A_bac"/>
    <property type="match status" value="1"/>
</dbReference>
<dbReference type="Pfam" id="PF03118">
    <property type="entry name" value="RNA_pol_A_CTD"/>
    <property type="match status" value="1"/>
</dbReference>
<dbReference type="Pfam" id="PF01193">
    <property type="entry name" value="RNA_pol_L"/>
    <property type="match status" value="1"/>
</dbReference>
<dbReference type="SMART" id="SM00662">
    <property type="entry name" value="RPOLD"/>
    <property type="match status" value="1"/>
</dbReference>
<dbReference type="SUPFAM" id="SSF47789">
    <property type="entry name" value="C-terminal domain of RNA polymerase alpha subunit"/>
    <property type="match status" value="1"/>
</dbReference>
<dbReference type="SUPFAM" id="SSF56553">
    <property type="entry name" value="Insert subdomain of RNA polymerase alpha subunit"/>
    <property type="match status" value="1"/>
</dbReference>
<dbReference type="SUPFAM" id="SSF55257">
    <property type="entry name" value="RBP11-like subunits of RNA polymerase"/>
    <property type="match status" value="1"/>
</dbReference>
<protein>
    <recommendedName>
        <fullName evidence="1">DNA-directed RNA polymerase subunit alpha</fullName>
        <shortName evidence="1">RNAP subunit alpha</shortName>
        <ecNumber evidence="1">2.7.7.6</ecNumber>
    </recommendedName>
    <alternativeName>
        <fullName evidence="1">RNA polymerase subunit alpha</fullName>
    </alternativeName>
    <alternativeName>
        <fullName evidence="1">Transcriptase subunit alpha</fullName>
    </alternativeName>
</protein>
<keyword id="KW-0002">3D-structure</keyword>
<keyword id="KW-0240">DNA-directed RNA polymerase</keyword>
<keyword id="KW-0548">Nucleotidyltransferase</keyword>
<keyword id="KW-1185">Reference proteome</keyword>
<keyword id="KW-0804">Transcription</keyword>
<keyword id="KW-0808">Transferase</keyword>
<proteinExistence type="evidence at protein level"/>
<name>RPOA_CLOD6</name>
<accession>Q18CI5</accession>
<comment type="function">
    <text evidence="1">DNA-dependent RNA polymerase catalyzes the transcription of DNA into RNA using the four ribonucleoside triphosphates as substrates.</text>
</comment>
<comment type="catalytic activity">
    <reaction evidence="1">
        <text>RNA(n) + a ribonucleoside 5'-triphosphate = RNA(n+1) + diphosphate</text>
        <dbReference type="Rhea" id="RHEA:21248"/>
        <dbReference type="Rhea" id="RHEA-COMP:14527"/>
        <dbReference type="Rhea" id="RHEA-COMP:17342"/>
        <dbReference type="ChEBI" id="CHEBI:33019"/>
        <dbReference type="ChEBI" id="CHEBI:61557"/>
        <dbReference type="ChEBI" id="CHEBI:140395"/>
        <dbReference type="EC" id="2.7.7.6"/>
    </reaction>
</comment>
<comment type="subunit">
    <text evidence="1">Homodimer. The RNAP catalytic core consists of 2 alpha, 1 beta, 1 beta' and 1 omega subunit. When a sigma factor is associated with the core the holoenzyme is formed, which can initiate transcription.</text>
</comment>
<comment type="domain">
    <text evidence="1">The N-terminal domain is essential for RNAP assembly and basal transcription, whereas the C-terminal domain is involved in interaction with transcriptional regulators and with upstream promoter elements.</text>
</comment>
<comment type="similarity">
    <text evidence="1">Belongs to the RNA polymerase alpha chain family.</text>
</comment>
<organism>
    <name type="scientific">Clostridioides difficile (strain 630)</name>
    <name type="common">Peptoclostridium difficile</name>
    <dbReference type="NCBI Taxonomy" id="272563"/>
    <lineage>
        <taxon>Bacteria</taxon>
        <taxon>Bacillati</taxon>
        <taxon>Bacillota</taxon>
        <taxon>Clostridia</taxon>
        <taxon>Peptostreptococcales</taxon>
        <taxon>Peptostreptococcaceae</taxon>
        <taxon>Clostridioides</taxon>
    </lineage>
</organism>
<sequence>MIEIEKPKVDIVELSEDYRYGKFVIEPLERGYGITIGNALRRILLSSLPGVAVNAIKIDGVLHEFSTIPGVKEDVTEIILTLKELSATIDGEGSRTLKIEAQGPCSITGADIICPPDVEILSKDLAIATLDDNAKLNMEIFVDKGRGYVSAEENKTENVPIGVLPVDSIYTPVEKVSYHVENTRVGQKTDYDKLVLEVWTNGSINPQEGISLAAKVLVEHLNLFIDLTEHVSSVEIMVEKEEDQKEKVLEMTIEELDLSVRSYNCLKRAGINTVEELANKSEDDMMKVRNLGKKSLEEVIQKLEELGLGLKPSEE</sequence>
<evidence type="ECO:0000255" key="1">
    <source>
        <dbReference type="HAMAP-Rule" id="MF_00059"/>
    </source>
</evidence>
<evidence type="ECO:0007829" key="2">
    <source>
        <dbReference type="PDB" id="7L7B"/>
    </source>
</evidence>
<feature type="chain" id="PRO_0000264492" description="DNA-directed RNA polymerase subunit alpha">
    <location>
        <begin position="1"/>
        <end position="315"/>
    </location>
</feature>
<feature type="region of interest" description="Alpha N-terminal domain (alpha-NTD)" evidence="1">
    <location>
        <begin position="1"/>
        <end position="228"/>
    </location>
</feature>
<feature type="region of interest" description="Alpha C-terminal domain (alpha-CTD)" evidence="1">
    <location>
        <begin position="245"/>
        <end position="315"/>
    </location>
</feature>
<feature type="strand" evidence="2">
    <location>
        <begin position="8"/>
        <end position="11"/>
    </location>
</feature>
<feature type="strand" evidence="2">
    <location>
        <begin position="22"/>
        <end position="29"/>
    </location>
</feature>
<feature type="helix" evidence="2">
    <location>
        <begin position="32"/>
        <end position="46"/>
    </location>
</feature>
<feature type="strand" evidence="2">
    <location>
        <begin position="49"/>
        <end position="58"/>
    </location>
</feature>
<feature type="strand" evidence="2">
    <location>
        <begin position="63"/>
        <end position="66"/>
    </location>
</feature>
<feature type="strand" evidence="2">
    <location>
        <begin position="71"/>
        <end position="73"/>
    </location>
</feature>
<feature type="helix" evidence="2">
    <location>
        <begin position="76"/>
        <end position="82"/>
    </location>
</feature>
<feature type="strand" evidence="2">
    <location>
        <begin position="90"/>
        <end position="93"/>
    </location>
</feature>
<feature type="strand" evidence="2">
    <location>
        <begin position="95"/>
        <end position="104"/>
    </location>
</feature>
<feature type="helix" evidence="2">
    <location>
        <begin position="109"/>
        <end position="111"/>
    </location>
</feature>
<feature type="strand" evidence="2">
    <location>
        <begin position="135"/>
        <end position="147"/>
    </location>
</feature>
<feature type="helix" evidence="2">
    <location>
        <begin position="151"/>
        <end position="154"/>
    </location>
</feature>
<feature type="strand" evidence="2">
    <location>
        <begin position="173"/>
        <end position="176"/>
    </location>
</feature>
<feature type="strand" evidence="2">
    <location>
        <begin position="186"/>
        <end position="188"/>
    </location>
</feature>
<feature type="strand" evidence="2">
    <location>
        <begin position="191"/>
        <end position="200"/>
    </location>
</feature>
<feature type="strand" evidence="2">
    <location>
        <begin position="202"/>
        <end position="204"/>
    </location>
</feature>
<feature type="helix" evidence="2">
    <location>
        <begin position="206"/>
        <end position="220"/>
    </location>
</feature>